<reference key="1">
    <citation type="journal article" date="2006" name="PLoS Genet.">
        <title>Genome sequence of Rickettsia bellii illuminates the role of amoebae in gene exchanges between intracellular pathogens.</title>
        <authorList>
            <person name="Ogata H."/>
            <person name="La Scola B."/>
            <person name="Audic S."/>
            <person name="Renesto P."/>
            <person name="Blanc G."/>
            <person name="Robert C."/>
            <person name="Fournier P.-E."/>
            <person name="Claverie J.-M."/>
            <person name="Raoult D."/>
        </authorList>
    </citation>
    <scope>NUCLEOTIDE SEQUENCE [LARGE SCALE GENOMIC DNA]</scope>
    <source>
        <strain>RML369-C</strain>
    </source>
</reference>
<dbReference type="EC" id="2.7.9.1" evidence="3"/>
<dbReference type="EMBL" id="CP000087">
    <property type="protein sequence ID" value="ABE05286.1"/>
    <property type="molecule type" value="Genomic_DNA"/>
</dbReference>
<dbReference type="RefSeq" id="WP_011477864.1">
    <property type="nucleotide sequence ID" value="NC_007940.1"/>
</dbReference>
<dbReference type="SMR" id="Q1RH78"/>
<dbReference type="KEGG" id="rbe:RBE_1205"/>
<dbReference type="eggNOG" id="COG0574">
    <property type="taxonomic scope" value="Bacteria"/>
</dbReference>
<dbReference type="eggNOG" id="COG1080">
    <property type="taxonomic scope" value="Bacteria"/>
</dbReference>
<dbReference type="HOGENOM" id="CLU_015345_0_2_5"/>
<dbReference type="OrthoDB" id="9765468at2"/>
<dbReference type="Proteomes" id="UP000001951">
    <property type="component" value="Chromosome"/>
</dbReference>
<dbReference type="GO" id="GO:0005524">
    <property type="term" value="F:ATP binding"/>
    <property type="evidence" value="ECO:0007669"/>
    <property type="project" value="UniProtKB-KW"/>
</dbReference>
<dbReference type="GO" id="GO:0016301">
    <property type="term" value="F:kinase activity"/>
    <property type="evidence" value="ECO:0007669"/>
    <property type="project" value="UniProtKB-KW"/>
</dbReference>
<dbReference type="GO" id="GO:0046872">
    <property type="term" value="F:metal ion binding"/>
    <property type="evidence" value="ECO:0007669"/>
    <property type="project" value="UniProtKB-KW"/>
</dbReference>
<dbReference type="GO" id="GO:0050242">
    <property type="term" value="F:pyruvate, phosphate dikinase activity"/>
    <property type="evidence" value="ECO:0007669"/>
    <property type="project" value="UniProtKB-EC"/>
</dbReference>
<dbReference type="Gene3D" id="1.20.80.30">
    <property type="match status" value="1"/>
</dbReference>
<dbReference type="Gene3D" id="3.30.1490.20">
    <property type="entry name" value="ATP-grasp fold, A domain"/>
    <property type="match status" value="1"/>
</dbReference>
<dbReference type="Gene3D" id="3.30.470.20">
    <property type="entry name" value="ATP-grasp fold, B domain"/>
    <property type="match status" value="1"/>
</dbReference>
<dbReference type="Gene3D" id="3.20.20.60">
    <property type="entry name" value="Phosphoenolpyruvate-binding domains"/>
    <property type="match status" value="1"/>
</dbReference>
<dbReference type="Gene3D" id="3.50.30.10">
    <property type="entry name" value="Phosphohistidine domain"/>
    <property type="match status" value="1"/>
</dbReference>
<dbReference type="Gene3D" id="1.10.189.10">
    <property type="entry name" value="Pyruvate Phosphate Dikinase, domain 2"/>
    <property type="match status" value="1"/>
</dbReference>
<dbReference type="InterPro" id="IPR013815">
    <property type="entry name" value="ATP_grasp_subdomain_1"/>
</dbReference>
<dbReference type="InterPro" id="IPR008279">
    <property type="entry name" value="PEP-util_enz_mobile_dom"/>
</dbReference>
<dbReference type="InterPro" id="IPR018274">
    <property type="entry name" value="PEP_util_AS"/>
</dbReference>
<dbReference type="InterPro" id="IPR000121">
    <property type="entry name" value="PEP_util_C"/>
</dbReference>
<dbReference type="InterPro" id="IPR023151">
    <property type="entry name" value="PEP_util_CS"/>
</dbReference>
<dbReference type="InterPro" id="IPR036637">
    <property type="entry name" value="Phosphohistidine_dom_sf"/>
</dbReference>
<dbReference type="InterPro" id="IPR002192">
    <property type="entry name" value="PPDK_AMP/ATP-bd"/>
</dbReference>
<dbReference type="InterPro" id="IPR010121">
    <property type="entry name" value="Pyruvate_phosphate_dikinase"/>
</dbReference>
<dbReference type="InterPro" id="IPR015813">
    <property type="entry name" value="Pyrv/PenolPyrv_kinase-like_dom"/>
</dbReference>
<dbReference type="InterPro" id="IPR040442">
    <property type="entry name" value="Pyrv_kinase-like_dom_sf"/>
</dbReference>
<dbReference type="NCBIfam" id="NF004531">
    <property type="entry name" value="PRK05878.1"/>
    <property type="match status" value="1"/>
</dbReference>
<dbReference type="NCBIfam" id="TIGR01828">
    <property type="entry name" value="pyru_phos_dikin"/>
    <property type="match status" value="1"/>
</dbReference>
<dbReference type="PANTHER" id="PTHR22931">
    <property type="entry name" value="PHOSPHOENOLPYRUVATE DIKINASE-RELATED"/>
    <property type="match status" value="1"/>
</dbReference>
<dbReference type="PANTHER" id="PTHR22931:SF9">
    <property type="entry name" value="PYRUVATE, PHOSPHATE DIKINASE 1, CHLOROPLASTIC"/>
    <property type="match status" value="1"/>
</dbReference>
<dbReference type="Pfam" id="PF00391">
    <property type="entry name" value="PEP-utilizers"/>
    <property type="match status" value="1"/>
</dbReference>
<dbReference type="Pfam" id="PF02896">
    <property type="entry name" value="PEP-utilizers_C"/>
    <property type="match status" value="1"/>
</dbReference>
<dbReference type="Pfam" id="PF01326">
    <property type="entry name" value="PPDK_N"/>
    <property type="match status" value="3"/>
</dbReference>
<dbReference type="PIRSF" id="PIRSF000853">
    <property type="entry name" value="PPDK"/>
    <property type="match status" value="1"/>
</dbReference>
<dbReference type="SUPFAM" id="SSF56059">
    <property type="entry name" value="Glutathione synthetase ATP-binding domain-like"/>
    <property type="match status" value="1"/>
</dbReference>
<dbReference type="SUPFAM" id="SSF51621">
    <property type="entry name" value="Phosphoenolpyruvate/pyruvate domain"/>
    <property type="match status" value="1"/>
</dbReference>
<dbReference type="SUPFAM" id="SSF52009">
    <property type="entry name" value="Phosphohistidine domain"/>
    <property type="match status" value="1"/>
</dbReference>
<dbReference type="PROSITE" id="PS00742">
    <property type="entry name" value="PEP_ENZYMES_2"/>
    <property type="match status" value="1"/>
</dbReference>
<dbReference type="PROSITE" id="PS00370">
    <property type="entry name" value="PEP_ENZYMES_PHOS_SITE"/>
    <property type="match status" value="1"/>
</dbReference>
<accession>Q1RH78</accession>
<feature type="chain" id="PRO_0000289277" description="Pyruvate, phosphate dikinase">
    <location>
        <begin position="1"/>
        <end position="878"/>
    </location>
</feature>
<feature type="region of interest" description="N-terminal">
    <location>
        <begin position="1"/>
        <end position="347"/>
    </location>
</feature>
<feature type="region of interest" description="Linker 1">
    <location>
        <begin position="348"/>
        <end position="404"/>
    </location>
</feature>
<feature type="region of interest" description="Central">
    <location>
        <begin position="405"/>
        <end position="502"/>
    </location>
</feature>
<feature type="region of interest" description="Linker 2">
    <location>
        <begin position="503"/>
        <end position="537"/>
    </location>
</feature>
<feature type="region of interest" description="C-terminal">
    <location>
        <begin position="538"/>
        <end position="878"/>
    </location>
</feature>
<feature type="active site" description="Tele-phosphohistidine intermediate" evidence="2">
    <location>
        <position position="459"/>
    </location>
</feature>
<feature type="active site" description="Proton donor" evidence="2">
    <location>
        <position position="835"/>
    </location>
</feature>
<feature type="binding site" evidence="4">
    <location>
        <position position="96"/>
    </location>
    <ligand>
        <name>ATP</name>
        <dbReference type="ChEBI" id="CHEBI:30616"/>
    </ligand>
</feature>
<feature type="binding site" evidence="2">
    <location>
        <position position="565"/>
    </location>
    <ligand>
        <name>substrate</name>
    </ligand>
</feature>
<feature type="binding site" evidence="2">
    <location>
        <position position="621"/>
    </location>
    <ligand>
        <name>substrate</name>
    </ligand>
</feature>
<feature type="binding site" evidence="2">
    <location>
        <position position="749"/>
    </location>
    <ligand>
        <name>Mg(2+)</name>
        <dbReference type="ChEBI" id="CHEBI:18420"/>
    </ligand>
</feature>
<feature type="binding site" evidence="2">
    <location>
        <position position="749"/>
    </location>
    <ligand>
        <name>substrate</name>
    </ligand>
</feature>
<feature type="binding site" evidence="2">
    <location>
        <position position="770"/>
    </location>
    <ligand>
        <name>substrate</name>
    </ligand>
</feature>
<feature type="binding site" evidence="2">
    <location>
        <position position="771"/>
    </location>
    <ligand>
        <name>substrate</name>
    </ligand>
</feature>
<feature type="binding site" evidence="2">
    <location>
        <position position="772"/>
    </location>
    <ligand>
        <name>substrate</name>
    </ligand>
</feature>
<feature type="binding site" evidence="2">
    <location>
        <position position="773"/>
    </location>
    <ligand>
        <name>Mg(2+)</name>
        <dbReference type="ChEBI" id="CHEBI:18420"/>
    </ligand>
</feature>
<feature type="binding site" evidence="2">
    <location>
        <position position="773"/>
    </location>
    <ligand>
        <name>substrate</name>
    </ligand>
</feature>
<feature type="modified residue" description="Phosphothreonine; by PDRP1" evidence="1">
    <location>
        <position position="457"/>
    </location>
</feature>
<proteinExistence type="inferred from homology"/>
<name>PPDK_RICBR</name>
<protein>
    <recommendedName>
        <fullName>Pyruvate, phosphate dikinase</fullName>
        <ecNumber evidence="3">2.7.9.1</ecNumber>
    </recommendedName>
    <alternativeName>
        <fullName>Pyruvate, orthophosphate dikinase</fullName>
    </alternativeName>
</protein>
<evidence type="ECO:0000250" key="1"/>
<evidence type="ECO:0000250" key="2">
    <source>
        <dbReference type="UniProtKB" id="P11155"/>
    </source>
</evidence>
<evidence type="ECO:0000250" key="3">
    <source>
        <dbReference type="UniProtKB" id="P22983"/>
    </source>
</evidence>
<evidence type="ECO:0000255" key="4"/>
<evidence type="ECO:0000305" key="5"/>
<keyword id="KW-0067">ATP-binding</keyword>
<keyword id="KW-0418">Kinase</keyword>
<keyword id="KW-0460">Magnesium</keyword>
<keyword id="KW-0479">Metal-binding</keyword>
<keyword id="KW-0547">Nucleotide-binding</keyword>
<keyword id="KW-0597">Phosphoprotein</keyword>
<keyword id="KW-0808">Transferase</keyword>
<gene>
    <name type="primary">ppdK</name>
    <name type="ordered locus">RBE_1205</name>
</gene>
<sequence length="878" mass="97899">MKKLIYYFGSNGSDGNASMKDILGNKGAGLAEMSNLKLPIPDGFTITTELCNYFYTHDNSFPKNFRNELRTAVEKLEATTGKVFGSTKNPLLLSVRSGSIVSMPGMMDTILNLGMNDEVCAALGEVCKDKRFALDSYKRFLEMYGATVLSIPSDLFEQIYERHKIQADIYRDSDVTPQLLEKIIEDFKKLHVKYAEKLITDPYEQLESAIKAVLNSWMSNRAVIYRKINNISESSGTAINIQSMVFGNLSKTSATGVIFTRSPSTGEKKLFGEFLINAQGEDIVSGTRTPLPIISDDSNSMKATMPKVFDELSKISETLEKHYLDMQDIEFTIENSKLYILQTRTAKRTAIAAIKIAVQMVEEKLISKEQALMRIDPESLNQLLHTRIDYSKGLTSIADGLPASPGAATGIIVFSPYDAEKLSHHHKVILVRHDTSPEDINGMHVSSGILTIRGGMTSHAAVVARGMGKPCVCGTNNLVIDEKKQTLIAGDLILKQDDIITIDGGTGKVFLGAVPLIQPTFSEESKLILEWADETSKLKIRTNAETVSDALVSVKFGAKGIGLCRSEHMFFDKNKIPLVREMIIAPDIDRRKLAVQKLLPLQTQDFKALFRVMGDKPVNIRLLDPPLHEFLPTTEEDKKNLASSLNLPLSMINQRLHAMHEVNPMLGHRGCRLGICSPEIYQMQVEAIFTAIFELHKEENIECKLELMIPLISNVNEIKKLKGDIYEMIHELEERYEHKFSFSLGTMIELPRAALNSKKIAEEVDYFSFGTNDLTQTTYGISRDDIASFLPYYLEERIFESDPFTTLDEEGVGELIEIAIKRGKSSNPSLKLGACGEHAGHPASIEFFHKMNLDYVSCSPYRIPIARIAAAQAKIKHG</sequence>
<organism>
    <name type="scientific">Rickettsia bellii (strain RML369-C)</name>
    <dbReference type="NCBI Taxonomy" id="336407"/>
    <lineage>
        <taxon>Bacteria</taxon>
        <taxon>Pseudomonadati</taxon>
        <taxon>Pseudomonadota</taxon>
        <taxon>Alphaproteobacteria</taxon>
        <taxon>Rickettsiales</taxon>
        <taxon>Rickettsiaceae</taxon>
        <taxon>Rickettsieae</taxon>
        <taxon>Rickettsia</taxon>
        <taxon>belli group</taxon>
    </lineage>
</organism>
<comment type="function">
    <text evidence="3">Catalyzes the reversible phosphorylation of pyruvate and phosphate.</text>
</comment>
<comment type="catalytic activity">
    <reaction evidence="3">
        <text>pyruvate + phosphate + ATP = phosphoenolpyruvate + AMP + diphosphate + H(+)</text>
        <dbReference type="Rhea" id="RHEA:10756"/>
        <dbReference type="ChEBI" id="CHEBI:15361"/>
        <dbReference type="ChEBI" id="CHEBI:15378"/>
        <dbReference type="ChEBI" id="CHEBI:30616"/>
        <dbReference type="ChEBI" id="CHEBI:33019"/>
        <dbReference type="ChEBI" id="CHEBI:43474"/>
        <dbReference type="ChEBI" id="CHEBI:58702"/>
        <dbReference type="ChEBI" id="CHEBI:456215"/>
        <dbReference type="EC" id="2.7.9.1"/>
    </reaction>
</comment>
<comment type="cofactor">
    <cofactor evidence="2">
        <name>Mg(2+)</name>
        <dbReference type="ChEBI" id="CHEBI:18420"/>
    </cofactor>
</comment>
<comment type="activity regulation">
    <text evidence="1">Activated by light-induced dephosphorylation. Inhibited by dark-induced phosphorylation. Both reactions are catalyzed by PDRP1 (By similarity).</text>
</comment>
<comment type="subunit">
    <text evidence="1">Homodimer.</text>
</comment>
<comment type="domain">
    <text evidence="1">The N-terminal domain contains the ATP/Pi active site, the central domain the pyrophosphate/phosphate carrier histidine, and the C-terminal domain the pyruvate active site.</text>
</comment>
<comment type="PTM">
    <text evidence="1">Phosphorylation of Thr-457 in the dark inactivates the enzyme. Dephosphorylation upon light stimulation reactivates the enzyme (By similarity).</text>
</comment>
<comment type="miscellaneous">
    <text>The reaction takes place in three steps, each mediated by a carrier histidine residue located on the surface of the central domain. The two first partial reactions are catalyzed at an active site located on the N-terminal domain, and the third partial reaction is catalyzed at an active site located on the C-terminal domain. For catalytic turnover, the central domain swivels from the concave surface of the N-terminal domain to that of the C-terminal domain.</text>
</comment>
<comment type="similarity">
    <text evidence="5">Belongs to the PEP-utilizing enzyme family.</text>
</comment>